<dbReference type="EC" id="2.1.1.-"/>
<dbReference type="EMBL" id="AAFI02000011">
    <property type="protein sequence ID" value="EAL70486.1"/>
    <property type="molecule type" value="Genomic_DNA"/>
</dbReference>
<dbReference type="EMBL" id="AAFI02000009">
    <property type="protein sequence ID" value="EAL70914.1"/>
    <property type="molecule type" value="Genomic_DNA"/>
</dbReference>
<dbReference type="RefSeq" id="XP_644412.1">
    <property type="nucleotide sequence ID" value="XM_639320.1"/>
</dbReference>
<dbReference type="RefSeq" id="XP_644838.1">
    <property type="nucleotide sequence ID" value="XM_639746.1"/>
</dbReference>
<dbReference type="SMR" id="Q557F6"/>
<dbReference type="PaxDb" id="44689-DDB0220707"/>
<dbReference type="EnsemblProtists" id="EAL70486">
    <property type="protein sequence ID" value="EAL70486"/>
    <property type="gene ID" value="DDB_G0273591"/>
</dbReference>
<dbReference type="EnsemblProtists" id="EAL70914">
    <property type="protein sequence ID" value="EAL70914"/>
    <property type="gene ID" value="DDB_G0273393"/>
</dbReference>
<dbReference type="GeneID" id="8619037"/>
<dbReference type="KEGG" id="ddi:DDB_G0273393"/>
<dbReference type="KEGG" id="ddi:DDB_G0273591"/>
<dbReference type="dictyBase" id="DDB_G0273393"/>
<dbReference type="dictyBase" id="DDB_G0273591"/>
<dbReference type="VEuPathDB" id="AmoebaDB:DDB_G0273591"/>
<dbReference type="eggNOG" id="KOG2084">
    <property type="taxonomic scope" value="Eukaryota"/>
</dbReference>
<dbReference type="HOGENOM" id="CLU_702894_0_0_1"/>
<dbReference type="InParanoid" id="Q557F6"/>
<dbReference type="OMA" id="ISIHIRC"/>
<dbReference type="PhylomeDB" id="Q557F6"/>
<dbReference type="Reactome" id="R-DDI-3214841">
    <property type="pathway name" value="PKMTs methylate histone lysines"/>
</dbReference>
<dbReference type="PRO" id="PR:Q557F6"/>
<dbReference type="Proteomes" id="UP000002195">
    <property type="component" value="Chromosome 2"/>
</dbReference>
<dbReference type="GO" id="GO:0005634">
    <property type="term" value="C:nucleus"/>
    <property type="evidence" value="ECO:0000318"/>
    <property type="project" value="GO_Central"/>
</dbReference>
<dbReference type="GO" id="GO:0008168">
    <property type="term" value="F:methyltransferase activity"/>
    <property type="evidence" value="ECO:0007669"/>
    <property type="project" value="UniProtKB-KW"/>
</dbReference>
<dbReference type="GO" id="GO:0008270">
    <property type="term" value="F:zinc ion binding"/>
    <property type="evidence" value="ECO:0007669"/>
    <property type="project" value="UniProtKB-KW"/>
</dbReference>
<dbReference type="GO" id="GO:0032259">
    <property type="term" value="P:methylation"/>
    <property type="evidence" value="ECO:0007669"/>
    <property type="project" value="UniProtKB-KW"/>
</dbReference>
<dbReference type="CDD" id="cd20071">
    <property type="entry name" value="SET_SMYD"/>
    <property type="match status" value="1"/>
</dbReference>
<dbReference type="Gene3D" id="2.170.270.10">
    <property type="entry name" value="SET domain"/>
    <property type="match status" value="1"/>
</dbReference>
<dbReference type="InterPro" id="IPR050869">
    <property type="entry name" value="H3K4_H4K5_MeTrfase"/>
</dbReference>
<dbReference type="InterPro" id="IPR001214">
    <property type="entry name" value="SET_dom"/>
</dbReference>
<dbReference type="InterPro" id="IPR046341">
    <property type="entry name" value="SET_dom_sf"/>
</dbReference>
<dbReference type="InterPro" id="IPR002893">
    <property type="entry name" value="Znf_MYND"/>
</dbReference>
<dbReference type="PANTHER" id="PTHR12197:SF251">
    <property type="entry name" value="EG:BACR7C10.4 PROTEIN"/>
    <property type="match status" value="1"/>
</dbReference>
<dbReference type="PANTHER" id="PTHR12197">
    <property type="entry name" value="HISTONE-LYSINE N-METHYLTRANSFERASE SMYD"/>
    <property type="match status" value="1"/>
</dbReference>
<dbReference type="SMART" id="SM00317">
    <property type="entry name" value="SET"/>
    <property type="match status" value="1"/>
</dbReference>
<dbReference type="SUPFAM" id="SSF144232">
    <property type="entry name" value="HIT/MYND zinc finger-like"/>
    <property type="match status" value="1"/>
</dbReference>
<dbReference type="SUPFAM" id="SSF82199">
    <property type="entry name" value="SET domain"/>
    <property type="match status" value="1"/>
</dbReference>
<dbReference type="PROSITE" id="PS50280">
    <property type="entry name" value="SET"/>
    <property type="match status" value="1"/>
</dbReference>
<dbReference type="PROSITE" id="PS01360">
    <property type="entry name" value="ZF_MYND_1"/>
    <property type="match status" value="1"/>
</dbReference>
<sequence length="413" mass="47881">MFKSFDGLKLSNSELEGRYIIANRDIDIGESILKCKSYFAVTCEDFKKNSCYNCIKLIKSPSPQQVPRCFGCNEVWYCSEKCKQDNQAKHQHYECAFFNNIKSPKLIQNSKLDFDSYSEIRIILGLLSRYYQDKLLNNKFNSSIIINNQQDDEEDFIKDTLDGVLDLVENDINEETNSVAKEYIDNIIEYIINILKLTINNNSNDNNNNNNNNNNNNNNNNNNNNNNNNNNNNNIEELIKLIRPLIQKVRCNQFGIWTKNDKCIGMAVSPSSSYFNHSCIPNCESVRDGSDMTFKSLFPIKKGDQINISYLALDKSTKRRRDYLKFGYYFHCQCPRCNSTDIDPTGKLEDSLDNWISKFYCHQKKCTGLYYSKLKLSLQSLTNIDNHEIQLSCSTCNDQLIVNSNFYLNKPNY</sequence>
<organism>
    <name type="scientific">Dictyostelium discoideum</name>
    <name type="common">Social amoeba</name>
    <dbReference type="NCBI Taxonomy" id="44689"/>
    <lineage>
        <taxon>Eukaryota</taxon>
        <taxon>Amoebozoa</taxon>
        <taxon>Evosea</taxon>
        <taxon>Eumycetozoa</taxon>
        <taxon>Dictyostelia</taxon>
        <taxon>Dictyosteliales</taxon>
        <taxon>Dictyosteliaceae</taxon>
        <taxon>Dictyostelium</taxon>
    </lineage>
</organism>
<reference key="1">
    <citation type="journal article" date="2002" name="Nature">
        <title>Sequence and analysis of chromosome 2 of Dictyostelium discoideum.</title>
        <authorList>
            <person name="Gloeckner G."/>
            <person name="Eichinger L."/>
            <person name="Szafranski K."/>
            <person name="Pachebat J.A."/>
            <person name="Bankier A.T."/>
            <person name="Dear P.H."/>
            <person name="Lehmann R."/>
            <person name="Baumgart C."/>
            <person name="Parra G."/>
            <person name="Abril J.F."/>
            <person name="Guigo R."/>
            <person name="Kumpf K."/>
            <person name="Tunggal B."/>
            <person name="Cox E.C."/>
            <person name="Quail M.A."/>
            <person name="Platzer M."/>
            <person name="Rosenthal A."/>
            <person name="Noegel A.A."/>
        </authorList>
    </citation>
    <scope>NUCLEOTIDE SEQUENCE [LARGE SCALE GENOMIC DNA]</scope>
    <source>
        <strain>AX4</strain>
    </source>
</reference>
<reference key="2">
    <citation type="journal article" date="2005" name="Nature">
        <title>The genome of the social amoeba Dictyostelium discoideum.</title>
        <authorList>
            <person name="Eichinger L."/>
            <person name="Pachebat J.A."/>
            <person name="Gloeckner G."/>
            <person name="Rajandream M.A."/>
            <person name="Sucgang R."/>
            <person name="Berriman M."/>
            <person name="Song J."/>
            <person name="Olsen R."/>
            <person name="Szafranski K."/>
            <person name="Xu Q."/>
            <person name="Tunggal B."/>
            <person name="Kummerfeld S."/>
            <person name="Madera M."/>
            <person name="Konfortov B.A."/>
            <person name="Rivero F."/>
            <person name="Bankier A.T."/>
            <person name="Lehmann R."/>
            <person name="Hamlin N."/>
            <person name="Davies R."/>
            <person name="Gaudet P."/>
            <person name="Fey P."/>
            <person name="Pilcher K."/>
            <person name="Chen G."/>
            <person name="Saunders D."/>
            <person name="Sodergren E.J."/>
            <person name="Davis P."/>
            <person name="Kerhornou A."/>
            <person name="Nie X."/>
            <person name="Hall N."/>
            <person name="Anjard C."/>
            <person name="Hemphill L."/>
            <person name="Bason N."/>
            <person name="Farbrother P."/>
            <person name="Desany B."/>
            <person name="Just E."/>
            <person name="Morio T."/>
            <person name="Rost R."/>
            <person name="Churcher C.M."/>
            <person name="Cooper J."/>
            <person name="Haydock S."/>
            <person name="van Driessche N."/>
            <person name="Cronin A."/>
            <person name="Goodhead I."/>
            <person name="Muzny D.M."/>
            <person name="Mourier T."/>
            <person name="Pain A."/>
            <person name="Lu M."/>
            <person name="Harper D."/>
            <person name="Lindsay R."/>
            <person name="Hauser H."/>
            <person name="James K.D."/>
            <person name="Quiles M."/>
            <person name="Madan Babu M."/>
            <person name="Saito T."/>
            <person name="Buchrieser C."/>
            <person name="Wardroper A."/>
            <person name="Felder M."/>
            <person name="Thangavelu M."/>
            <person name="Johnson D."/>
            <person name="Knights A."/>
            <person name="Loulseged H."/>
            <person name="Mungall K.L."/>
            <person name="Oliver K."/>
            <person name="Price C."/>
            <person name="Quail M.A."/>
            <person name="Urushihara H."/>
            <person name="Hernandez J."/>
            <person name="Rabbinowitsch E."/>
            <person name="Steffen D."/>
            <person name="Sanders M."/>
            <person name="Ma J."/>
            <person name="Kohara Y."/>
            <person name="Sharp S."/>
            <person name="Simmonds M.N."/>
            <person name="Spiegler S."/>
            <person name="Tivey A."/>
            <person name="Sugano S."/>
            <person name="White B."/>
            <person name="Walker D."/>
            <person name="Woodward J.R."/>
            <person name="Winckler T."/>
            <person name="Tanaka Y."/>
            <person name="Shaulsky G."/>
            <person name="Schleicher M."/>
            <person name="Weinstock G.M."/>
            <person name="Rosenthal A."/>
            <person name="Cox E.C."/>
            <person name="Chisholm R.L."/>
            <person name="Gibbs R.A."/>
            <person name="Loomis W.F."/>
            <person name="Platzer M."/>
            <person name="Kay R.R."/>
            <person name="Williams J.G."/>
            <person name="Dear P.H."/>
            <person name="Noegel A.A."/>
            <person name="Barrell B.G."/>
            <person name="Kuspa A."/>
        </authorList>
    </citation>
    <scope>NUCLEOTIDE SEQUENCE [LARGE SCALE GENOMIC DNA]</scope>
    <source>
        <strain>AX4</strain>
    </source>
</reference>
<name>Y3591_DICDI</name>
<accession>Q557F6</accession>
<comment type="function">
    <text evidence="1">Probable methyltransferase.</text>
</comment>
<comment type="similarity">
    <text evidence="3">Belongs to the class V-like SAM-binding methyltransferase superfamily.</text>
</comment>
<feature type="chain" id="PRO_0000389433" description="SET and MYND domain-containing protein DDB_G0273591">
    <location>
        <begin position="1"/>
        <end position="413"/>
    </location>
</feature>
<feature type="domain" description="SET" evidence="3">
    <location>
        <begin position="6"/>
        <end position="311"/>
    </location>
</feature>
<feature type="zinc finger region" description="MYND-type">
    <location>
        <begin position="51"/>
        <end position="95"/>
    </location>
</feature>
<feature type="region of interest" description="Disordered" evidence="4">
    <location>
        <begin position="205"/>
        <end position="232"/>
    </location>
</feature>
<feature type="coiled-coil region" evidence="2">
    <location>
        <begin position="216"/>
        <end position="243"/>
    </location>
</feature>
<gene>
    <name type="ORF">DDB_G0273591</name>
</gene>
<proteinExistence type="inferred from homology"/>
<evidence type="ECO:0000250" key="1"/>
<evidence type="ECO:0000255" key="2"/>
<evidence type="ECO:0000255" key="3">
    <source>
        <dbReference type="PROSITE-ProRule" id="PRU00190"/>
    </source>
</evidence>
<evidence type="ECO:0000256" key="4">
    <source>
        <dbReference type="SAM" id="MobiDB-lite"/>
    </source>
</evidence>
<protein>
    <recommendedName>
        <fullName>SET and MYND domain-containing protein DDB_G0273591</fullName>
        <ecNumber>2.1.1.-</ecNumber>
    </recommendedName>
</protein>
<keyword id="KW-0175">Coiled coil</keyword>
<keyword id="KW-0479">Metal-binding</keyword>
<keyword id="KW-0489">Methyltransferase</keyword>
<keyword id="KW-1185">Reference proteome</keyword>
<keyword id="KW-0949">S-adenosyl-L-methionine</keyword>
<keyword id="KW-0808">Transferase</keyword>
<keyword id="KW-0862">Zinc</keyword>
<keyword id="KW-0863">Zinc-finger</keyword>